<dbReference type="EMBL" id="CP001063">
    <property type="protein sequence ID" value="ACD10315.1"/>
    <property type="molecule type" value="Genomic_DNA"/>
</dbReference>
<dbReference type="RefSeq" id="WP_000748502.1">
    <property type="nucleotide sequence ID" value="NC_010658.1"/>
</dbReference>
<dbReference type="SMR" id="B2TUR4"/>
<dbReference type="STRING" id="344609.SbBS512_E4211"/>
<dbReference type="GeneID" id="93778452"/>
<dbReference type="KEGG" id="sbc:SbBS512_E4211"/>
<dbReference type="HOGENOM" id="CLU_039613_39_2_6"/>
<dbReference type="Proteomes" id="UP000001030">
    <property type="component" value="Chromosome"/>
</dbReference>
<dbReference type="GO" id="GO:0003677">
    <property type="term" value="F:DNA binding"/>
    <property type="evidence" value="ECO:0007669"/>
    <property type="project" value="UniProtKB-KW"/>
</dbReference>
<dbReference type="GO" id="GO:0003700">
    <property type="term" value="F:DNA-binding transcription factor activity"/>
    <property type="evidence" value="ECO:0007669"/>
    <property type="project" value="UniProtKB-UniRule"/>
</dbReference>
<dbReference type="CDD" id="cd08417">
    <property type="entry name" value="PBP2_Nitroaromatics_like"/>
    <property type="match status" value="1"/>
</dbReference>
<dbReference type="FunFam" id="3.40.190.10:FF:000092">
    <property type="entry name" value="HTH-type transcriptional regulator YidZ"/>
    <property type="match status" value="1"/>
</dbReference>
<dbReference type="Gene3D" id="3.40.190.10">
    <property type="entry name" value="Periplasmic binding protein-like II"/>
    <property type="match status" value="2"/>
</dbReference>
<dbReference type="Gene3D" id="1.10.10.10">
    <property type="entry name" value="Winged helix-like DNA-binding domain superfamily/Winged helix DNA-binding domain"/>
    <property type="match status" value="1"/>
</dbReference>
<dbReference type="HAMAP" id="MF_01607">
    <property type="entry name" value="HTH_type_YidZ"/>
    <property type="match status" value="1"/>
</dbReference>
<dbReference type="InterPro" id="IPR050389">
    <property type="entry name" value="LysR-type_TF"/>
</dbReference>
<dbReference type="InterPro" id="IPR005119">
    <property type="entry name" value="LysR_subst-bd"/>
</dbReference>
<dbReference type="InterPro" id="IPR000847">
    <property type="entry name" value="Tscrpt_reg_HTH_LysR"/>
</dbReference>
<dbReference type="InterPro" id="IPR023746">
    <property type="entry name" value="Tscrpt_reg_YidZ"/>
</dbReference>
<dbReference type="InterPro" id="IPR036388">
    <property type="entry name" value="WH-like_DNA-bd_sf"/>
</dbReference>
<dbReference type="InterPro" id="IPR036390">
    <property type="entry name" value="WH_DNA-bd_sf"/>
</dbReference>
<dbReference type="InterPro" id="IPR037402">
    <property type="entry name" value="YidZ_PBP2"/>
</dbReference>
<dbReference type="NCBIfam" id="NF007581">
    <property type="entry name" value="PRK10216.1"/>
    <property type="match status" value="1"/>
</dbReference>
<dbReference type="PANTHER" id="PTHR30118">
    <property type="entry name" value="HTH-TYPE TRANSCRIPTIONAL REGULATOR LEUO-RELATED"/>
    <property type="match status" value="1"/>
</dbReference>
<dbReference type="PANTHER" id="PTHR30118:SF11">
    <property type="entry name" value="HTH-TYPE TRANSCRIPTIONAL REGULATOR YIDZ"/>
    <property type="match status" value="1"/>
</dbReference>
<dbReference type="Pfam" id="PF00126">
    <property type="entry name" value="HTH_1"/>
    <property type="match status" value="1"/>
</dbReference>
<dbReference type="Pfam" id="PF03466">
    <property type="entry name" value="LysR_substrate"/>
    <property type="match status" value="1"/>
</dbReference>
<dbReference type="SUPFAM" id="SSF53850">
    <property type="entry name" value="Periplasmic binding protein-like II"/>
    <property type="match status" value="1"/>
</dbReference>
<dbReference type="SUPFAM" id="SSF46785">
    <property type="entry name" value="Winged helix' DNA-binding domain"/>
    <property type="match status" value="1"/>
</dbReference>
<dbReference type="PROSITE" id="PS50931">
    <property type="entry name" value="HTH_LYSR"/>
    <property type="match status" value="1"/>
</dbReference>
<evidence type="ECO:0000255" key="1">
    <source>
        <dbReference type="HAMAP-Rule" id="MF_01607"/>
    </source>
</evidence>
<evidence type="ECO:0000305" key="2"/>
<reference key="1">
    <citation type="submission" date="2008-05" db="EMBL/GenBank/DDBJ databases">
        <title>Complete sequence of Shigella boydii serotype 18 strain BS512.</title>
        <authorList>
            <person name="Rasko D.A."/>
            <person name="Rosovitz M."/>
            <person name="Maurelli A.T."/>
            <person name="Myers G."/>
            <person name="Seshadri R."/>
            <person name="Cer R."/>
            <person name="Jiang L."/>
            <person name="Ravel J."/>
            <person name="Sebastian Y."/>
        </authorList>
    </citation>
    <scope>NUCLEOTIDE SEQUENCE [LARGE SCALE GENOMIC DNA]</scope>
    <source>
        <strain>CDC 3083-94 / BS512</strain>
    </source>
</reference>
<keyword id="KW-0238">DNA-binding</keyword>
<keyword id="KW-1185">Reference proteome</keyword>
<keyword id="KW-0804">Transcription</keyword>
<keyword id="KW-0805">Transcription regulation</keyword>
<comment type="function">
    <text evidence="1">Involved in anaerobic NO protection.</text>
</comment>
<comment type="similarity">
    <text evidence="2">Belongs to the LysR transcriptional regulatory family.</text>
</comment>
<accession>B2TUR4</accession>
<name>YIDZ_SHIB3</name>
<proteinExistence type="inferred from homology"/>
<organism>
    <name type="scientific">Shigella boydii serotype 18 (strain CDC 3083-94 / BS512)</name>
    <dbReference type="NCBI Taxonomy" id="344609"/>
    <lineage>
        <taxon>Bacteria</taxon>
        <taxon>Pseudomonadati</taxon>
        <taxon>Pseudomonadota</taxon>
        <taxon>Gammaproteobacteria</taxon>
        <taxon>Enterobacterales</taxon>
        <taxon>Enterobacteriaceae</taxon>
        <taxon>Shigella</taxon>
    </lineage>
</organism>
<protein>
    <recommendedName>
        <fullName evidence="1">HTH-type transcriptional regulator YidZ</fullName>
    </recommendedName>
</protein>
<gene>
    <name evidence="1" type="primary">yidZ</name>
    <name type="ordered locus">SbBS512_E4211</name>
</gene>
<feature type="chain" id="PRO_1000148204" description="HTH-type transcriptional regulator YidZ">
    <location>
        <begin position="1"/>
        <end position="319"/>
    </location>
</feature>
<feature type="domain" description="HTH lysR-type" evidence="1">
    <location>
        <begin position="8"/>
        <end position="65"/>
    </location>
</feature>
<feature type="DNA-binding region" description="H-T-H motif" evidence="1">
    <location>
        <begin position="25"/>
        <end position="44"/>
    </location>
</feature>
<sequence length="319" mass="36929">MKKSITTLDLNLLLCLQLLMQERSVTKAAKRMNVTPSAVSKSLAKLRAWFDDPLFVNSPLGLSPTPLMVSMEQNLAEWMQMSNLLLDKPHHQTPRGLKFELAAESPLMMIMLNALSKRIYQRYPQATIKLRNWDYDSLDAITRGEVDIGFSGRESHPRSRELLSSLPLAIDYEVLFSDVPCVWLRKDHPALHETWNLDTFLRYPHISICWEQSDTWALDNVLQELGRERTIAMSLPEFEQSLFMAAQPDNLLLATAPRYCQYYNQLHQLPLVALPLPFDESQQKKLEVPFTLLWHKRNSHNPKIVWLRETIKNLYASMA</sequence>